<feature type="chain" id="PRO_0000103125" description="4-hydroxy-tetrahydrodipicolinate synthase">
    <location>
        <begin position="1"/>
        <end position="293"/>
    </location>
</feature>
<feature type="active site" description="Proton donor/acceptor" evidence="1">
    <location>
        <position position="136"/>
    </location>
</feature>
<feature type="active site" description="Schiff-base intermediate with substrate" evidence="1">
    <location>
        <position position="164"/>
    </location>
</feature>
<feature type="binding site" evidence="1">
    <location>
        <position position="47"/>
    </location>
    <ligand>
        <name>pyruvate</name>
        <dbReference type="ChEBI" id="CHEBI:15361"/>
    </ligand>
</feature>
<feature type="binding site" evidence="1">
    <location>
        <position position="206"/>
    </location>
    <ligand>
        <name>pyruvate</name>
        <dbReference type="ChEBI" id="CHEBI:15361"/>
    </ligand>
</feature>
<feature type="site" description="Part of a proton relay during catalysis" evidence="1">
    <location>
        <position position="46"/>
    </location>
</feature>
<feature type="site" description="Part of a proton relay during catalysis" evidence="1">
    <location>
        <position position="110"/>
    </location>
</feature>
<organism>
    <name type="scientific">Listeria monocytogenes serovar 1/2a (strain ATCC BAA-679 / EGD-e)</name>
    <dbReference type="NCBI Taxonomy" id="169963"/>
    <lineage>
        <taxon>Bacteria</taxon>
        <taxon>Bacillati</taxon>
        <taxon>Bacillota</taxon>
        <taxon>Bacilli</taxon>
        <taxon>Bacillales</taxon>
        <taxon>Listeriaceae</taxon>
        <taxon>Listeria</taxon>
    </lineage>
</organism>
<evidence type="ECO:0000255" key="1">
    <source>
        <dbReference type="HAMAP-Rule" id="MF_00418"/>
    </source>
</evidence>
<evidence type="ECO:0000305" key="2"/>
<accession>Q8Y766</accession>
<comment type="function">
    <text evidence="1">Catalyzes the condensation of (S)-aspartate-beta-semialdehyde [(S)-ASA] and pyruvate to 4-hydroxy-tetrahydrodipicolinate (HTPA).</text>
</comment>
<comment type="catalytic activity">
    <reaction evidence="1">
        <text>L-aspartate 4-semialdehyde + pyruvate = (2S,4S)-4-hydroxy-2,3,4,5-tetrahydrodipicolinate + H2O + H(+)</text>
        <dbReference type="Rhea" id="RHEA:34171"/>
        <dbReference type="ChEBI" id="CHEBI:15361"/>
        <dbReference type="ChEBI" id="CHEBI:15377"/>
        <dbReference type="ChEBI" id="CHEBI:15378"/>
        <dbReference type="ChEBI" id="CHEBI:67139"/>
        <dbReference type="ChEBI" id="CHEBI:537519"/>
        <dbReference type="EC" id="4.3.3.7"/>
    </reaction>
</comment>
<comment type="pathway">
    <text evidence="1">Amino-acid biosynthesis; L-lysine biosynthesis via DAP pathway; (S)-tetrahydrodipicolinate from L-aspartate: step 3/4.</text>
</comment>
<comment type="subunit">
    <text evidence="1">Homotetramer; dimer of dimers.</text>
</comment>
<comment type="subcellular location">
    <subcellularLocation>
        <location evidence="1">Cytoplasm</location>
    </subcellularLocation>
</comment>
<comment type="similarity">
    <text evidence="1">Belongs to the DapA family.</text>
</comment>
<comment type="caution">
    <text evidence="2">Was originally thought to be a dihydrodipicolinate synthase (DHDPS), catalyzing the condensation of (S)-aspartate-beta-semialdehyde [(S)-ASA] and pyruvate to dihydrodipicolinate (DHDP). However, it was shown in E.coli that the product of the enzymatic reaction is not dihydrodipicolinate but in fact (4S)-4-hydroxy-2,3,4,5-tetrahydro-(2S)-dipicolinic acid (HTPA), and that the consecutive dehydration reaction leading to DHDP is not spontaneous but catalyzed by DapB.</text>
</comment>
<reference key="1">
    <citation type="journal article" date="2001" name="Science">
        <title>Comparative genomics of Listeria species.</title>
        <authorList>
            <person name="Glaser P."/>
            <person name="Frangeul L."/>
            <person name="Buchrieser C."/>
            <person name="Rusniok C."/>
            <person name="Amend A."/>
            <person name="Baquero F."/>
            <person name="Berche P."/>
            <person name="Bloecker H."/>
            <person name="Brandt P."/>
            <person name="Chakraborty T."/>
            <person name="Charbit A."/>
            <person name="Chetouani F."/>
            <person name="Couve E."/>
            <person name="de Daruvar A."/>
            <person name="Dehoux P."/>
            <person name="Domann E."/>
            <person name="Dominguez-Bernal G."/>
            <person name="Duchaud E."/>
            <person name="Durant L."/>
            <person name="Dussurget O."/>
            <person name="Entian K.-D."/>
            <person name="Fsihi H."/>
            <person name="Garcia-del Portillo F."/>
            <person name="Garrido P."/>
            <person name="Gautier L."/>
            <person name="Goebel W."/>
            <person name="Gomez-Lopez N."/>
            <person name="Hain T."/>
            <person name="Hauf J."/>
            <person name="Jackson D."/>
            <person name="Jones L.-M."/>
            <person name="Kaerst U."/>
            <person name="Kreft J."/>
            <person name="Kuhn M."/>
            <person name="Kunst F."/>
            <person name="Kurapkat G."/>
            <person name="Madueno E."/>
            <person name="Maitournam A."/>
            <person name="Mata Vicente J."/>
            <person name="Ng E."/>
            <person name="Nedjari H."/>
            <person name="Nordsiek G."/>
            <person name="Novella S."/>
            <person name="de Pablos B."/>
            <person name="Perez-Diaz J.-C."/>
            <person name="Purcell R."/>
            <person name="Remmel B."/>
            <person name="Rose M."/>
            <person name="Schlueter T."/>
            <person name="Simoes N."/>
            <person name="Tierrez A."/>
            <person name="Vazquez-Boland J.-A."/>
            <person name="Voss H."/>
            <person name="Wehland J."/>
            <person name="Cossart P."/>
        </authorList>
    </citation>
    <scope>NUCLEOTIDE SEQUENCE [LARGE SCALE GENOMIC DNA]</scope>
    <source>
        <strain>ATCC BAA-679 / EGD-e</strain>
    </source>
</reference>
<protein>
    <recommendedName>
        <fullName evidence="1">4-hydroxy-tetrahydrodipicolinate synthase</fullName>
        <shortName evidence="1">HTPA synthase</shortName>
        <ecNumber evidence="1">4.3.3.7</ecNumber>
    </recommendedName>
</protein>
<dbReference type="EC" id="4.3.3.7" evidence="1"/>
<dbReference type="EMBL" id="AL591979">
    <property type="protein sequence ID" value="CAC99513.1"/>
    <property type="molecule type" value="Genomic_DNA"/>
</dbReference>
<dbReference type="PIR" id="AC1254">
    <property type="entry name" value="AC1254"/>
</dbReference>
<dbReference type="RefSeq" id="NP_464960.1">
    <property type="nucleotide sequence ID" value="NC_003210.1"/>
</dbReference>
<dbReference type="RefSeq" id="WP_003721940.1">
    <property type="nucleotide sequence ID" value="NZ_CP149495.1"/>
</dbReference>
<dbReference type="SMR" id="Q8Y766"/>
<dbReference type="STRING" id="169963.gene:17594092"/>
<dbReference type="PaxDb" id="169963-lmo1435"/>
<dbReference type="EnsemblBacteria" id="CAC99513">
    <property type="protein sequence ID" value="CAC99513"/>
    <property type="gene ID" value="CAC99513"/>
</dbReference>
<dbReference type="GeneID" id="986494"/>
<dbReference type="KEGG" id="lmo:lmo1435"/>
<dbReference type="PATRIC" id="fig|169963.11.peg.1474"/>
<dbReference type="eggNOG" id="COG0329">
    <property type="taxonomic scope" value="Bacteria"/>
</dbReference>
<dbReference type="HOGENOM" id="CLU_049343_7_1_9"/>
<dbReference type="OrthoDB" id="9782828at2"/>
<dbReference type="PhylomeDB" id="Q8Y766"/>
<dbReference type="BioCyc" id="LMON169963:LMO1435-MONOMER"/>
<dbReference type="UniPathway" id="UPA00034">
    <property type="reaction ID" value="UER00017"/>
</dbReference>
<dbReference type="Proteomes" id="UP000000817">
    <property type="component" value="Chromosome"/>
</dbReference>
<dbReference type="GO" id="GO:0005829">
    <property type="term" value="C:cytosol"/>
    <property type="evidence" value="ECO:0000318"/>
    <property type="project" value="GO_Central"/>
</dbReference>
<dbReference type="GO" id="GO:0008840">
    <property type="term" value="F:4-hydroxy-tetrahydrodipicolinate synthase activity"/>
    <property type="evidence" value="ECO:0000318"/>
    <property type="project" value="GO_Central"/>
</dbReference>
<dbReference type="GO" id="GO:0019877">
    <property type="term" value="P:diaminopimelate biosynthetic process"/>
    <property type="evidence" value="ECO:0007669"/>
    <property type="project" value="UniProtKB-UniRule"/>
</dbReference>
<dbReference type="GO" id="GO:0009089">
    <property type="term" value="P:lysine biosynthetic process via diaminopimelate"/>
    <property type="evidence" value="ECO:0007669"/>
    <property type="project" value="UniProtKB-UniRule"/>
</dbReference>
<dbReference type="CDD" id="cd00950">
    <property type="entry name" value="DHDPS"/>
    <property type="match status" value="1"/>
</dbReference>
<dbReference type="Gene3D" id="3.20.20.70">
    <property type="entry name" value="Aldolase class I"/>
    <property type="match status" value="1"/>
</dbReference>
<dbReference type="HAMAP" id="MF_00418">
    <property type="entry name" value="DapA"/>
    <property type="match status" value="1"/>
</dbReference>
<dbReference type="InterPro" id="IPR013785">
    <property type="entry name" value="Aldolase_TIM"/>
</dbReference>
<dbReference type="InterPro" id="IPR005263">
    <property type="entry name" value="DapA"/>
</dbReference>
<dbReference type="InterPro" id="IPR002220">
    <property type="entry name" value="DapA-like"/>
</dbReference>
<dbReference type="InterPro" id="IPR020625">
    <property type="entry name" value="Schiff_base-form_aldolases_AS"/>
</dbReference>
<dbReference type="InterPro" id="IPR020624">
    <property type="entry name" value="Schiff_base-form_aldolases_CS"/>
</dbReference>
<dbReference type="NCBIfam" id="TIGR00674">
    <property type="entry name" value="dapA"/>
    <property type="match status" value="1"/>
</dbReference>
<dbReference type="PANTHER" id="PTHR12128:SF66">
    <property type="entry name" value="4-HYDROXY-2-OXOGLUTARATE ALDOLASE, MITOCHONDRIAL"/>
    <property type="match status" value="1"/>
</dbReference>
<dbReference type="PANTHER" id="PTHR12128">
    <property type="entry name" value="DIHYDRODIPICOLINATE SYNTHASE"/>
    <property type="match status" value="1"/>
</dbReference>
<dbReference type="Pfam" id="PF00701">
    <property type="entry name" value="DHDPS"/>
    <property type="match status" value="1"/>
</dbReference>
<dbReference type="PIRSF" id="PIRSF001365">
    <property type="entry name" value="DHDPS"/>
    <property type="match status" value="1"/>
</dbReference>
<dbReference type="PRINTS" id="PR00146">
    <property type="entry name" value="DHPICSNTHASE"/>
</dbReference>
<dbReference type="SMART" id="SM01130">
    <property type="entry name" value="DHDPS"/>
    <property type="match status" value="1"/>
</dbReference>
<dbReference type="SUPFAM" id="SSF51569">
    <property type="entry name" value="Aldolase"/>
    <property type="match status" value="1"/>
</dbReference>
<dbReference type="PROSITE" id="PS00665">
    <property type="entry name" value="DHDPS_1"/>
    <property type="match status" value="1"/>
</dbReference>
<dbReference type="PROSITE" id="PS00666">
    <property type="entry name" value="DHDPS_2"/>
    <property type="match status" value="1"/>
</dbReference>
<name>DAPA_LISMO</name>
<keyword id="KW-0028">Amino-acid biosynthesis</keyword>
<keyword id="KW-0963">Cytoplasm</keyword>
<keyword id="KW-0220">Diaminopimelate biosynthesis</keyword>
<keyword id="KW-0456">Lyase</keyword>
<keyword id="KW-0457">Lysine biosynthesis</keyword>
<keyword id="KW-1185">Reference proteome</keyword>
<keyword id="KW-0704">Schiff base</keyword>
<gene>
    <name evidence="1" type="primary">dapA</name>
    <name type="ordered locus">lmo1435</name>
</gene>
<proteinExistence type="inferred from homology"/>
<sequence>MDLGKVITAMVTPIHPEKDKVCKKRIHHLVNHLIKNGSDGLVIAGTTGESPTLSHDEKIKLFRQVIETNDGRAKLIAGTGSNNTAETIAFTKEVATLGGMDAVLIVAPYYNKPNQDGLYAHFAAVAEASDLPVVIYNIPGRSVVNIEPETIIRLAKLPNIVGVKESSGNLDNISKIIAETSDDFQVYSGDDSLTLPILAVGGNGVISVASHIVGNEMQEMIQAFERGEVQKAAQIHRELLPLMNGLFSVPNPAPTKYLLNQQGISVGPVRLPLVDLNAEQGTKLQAILEGLSK</sequence>